<protein>
    <recommendedName>
        <fullName evidence="1">Glutamate 5-kinase</fullName>
        <ecNumber evidence="1">2.7.2.11</ecNumber>
    </recommendedName>
    <alternativeName>
        <fullName evidence="1">Gamma-glutamyl kinase</fullName>
        <shortName evidence="1">GK</shortName>
    </alternativeName>
</protein>
<sequence>MSEHREAVRTARSVVVKIGTTALTTPSGVFDANRLASLVEAIEGRMKAGSDVVIVSSGAIAAGIEPLGLSKRPTDLATKQAAASVGQVALVNAWSAAFAVYNRTVGQVLLTAHDISMRVQHNNAQRTLDRLRALHAVAIVNENDTVATNEIRFGDNDRLSALVAHLVGADALILLSDIDGLYDGDPRKATPDKPARFIPEVAAQGDLDGVVAGRGSSLGTGGMASKLSSALLAADAGVPVLLAAAADAGRALDDASVGTVFAPRPERMSARKFWMRYAAESAGALTLDDGAVRAVIKQRRSLLPAGITSVTGRFHGGDVVDLRALDGHTVARGVVAYDQAELASIIGRSTHELPVEMRRPAVHADDLVRT</sequence>
<gene>
    <name evidence="1" type="primary">proB</name>
    <name type="ordered locus">MSMEG_4621</name>
    <name type="ordered locus">MSMEI_4505</name>
</gene>
<accession>A0R148</accession>
<accession>I7GDU5</accession>
<dbReference type="EC" id="2.7.2.11" evidence="1"/>
<dbReference type="EMBL" id="CP000480">
    <property type="protein sequence ID" value="ABK71775.1"/>
    <property type="molecule type" value="Genomic_DNA"/>
</dbReference>
<dbReference type="EMBL" id="CP001663">
    <property type="protein sequence ID" value="AFP40959.1"/>
    <property type="molecule type" value="Genomic_DNA"/>
</dbReference>
<dbReference type="RefSeq" id="WP_011729969.1">
    <property type="nucleotide sequence ID" value="NZ_SIJM01000004.1"/>
</dbReference>
<dbReference type="RefSeq" id="YP_888886.1">
    <property type="nucleotide sequence ID" value="NC_008596.1"/>
</dbReference>
<dbReference type="SMR" id="A0R148"/>
<dbReference type="STRING" id="246196.MSMEG_4621"/>
<dbReference type="PaxDb" id="246196-MSMEI_4505"/>
<dbReference type="GeneID" id="93459311"/>
<dbReference type="KEGG" id="msb:LJ00_22860"/>
<dbReference type="KEGG" id="msg:MSMEI_4505"/>
<dbReference type="KEGG" id="msm:MSMEG_4621"/>
<dbReference type="PATRIC" id="fig|246196.19.peg.4517"/>
<dbReference type="eggNOG" id="COG0263">
    <property type="taxonomic scope" value="Bacteria"/>
</dbReference>
<dbReference type="OrthoDB" id="9804434at2"/>
<dbReference type="UniPathway" id="UPA00098">
    <property type="reaction ID" value="UER00359"/>
</dbReference>
<dbReference type="Proteomes" id="UP000000757">
    <property type="component" value="Chromosome"/>
</dbReference>
<dbReference type="Proteomes" id="UP000006158">
    <property type="component" value="Chromosome"/>
</dbReference>
<dbReference type="GO" id="GO:0005829">
    <property type="term" value="C:cytosol"/>
    <property type="evidence" value="ECO:0007669"/>
    <property type="project" value="TreeGrafter"/>
</dbReference>
<dbReference type="GO" id="GO:0005524">
    <property type="term" value="F:ATP binding"/>
    <property type="evidence" value="ECO:0007669"/>
    <property type="project" value="UniProtKB-KW"/>
</dbReference>
<dbReference type="GO" id="GO:0004349">
    <property type="term" value="F:glutamate 5-kinase activity"/>
    <property type="evidence" value="ECO:0007669"/>
    <property type="project" value="UniProtKB-UniRule"/>
</dbReference>
<dbReference type="GO" id="GO:0003723">
    <property type="term" value="F:RNA binding"/>
    <property type="evidence" value="ECO:0007669"/>
    <property type="project" value="InterPro"/>
</dbReference>
<dbReference type="GO" id="GO:0055129">
    <property type="term" value="P:L-proline biosynthetic process"/>
    <property type="evidence" value="ECO:0007669"/>
    <property type="project" value="UniProtKB-UniRule"/>
</dbReference>
<dbReference type="CDD" id="cd04242">
    <property type="entry name" value="AAK_G5K_ProB"/>
    <property type="match status" value="1"/>
</dbReference>
<dbReference type="CDD" id="cd21157">
    <property type="entry name" value="PUA_G5K"/>
    <property type="match status" value="1"/>
</dbReference>
<dbReference type="FunFam" id="3.40.1160.10:FF:000018">
    <property type="entry name" value="Glutamate 5-kinase"/>
    <property type="match status" value="1"/>
</dbReference>
<dbReference type="Gene3D" id="3.40.1160.10">
    <property type="entry name" value="Acetylglutamate kinase-like"/>
    <property type="match status" value="2"/>
</dbReference>
<dbReference type="Gene3D" id="2.30.130.10">
    <property type="entry name" value="PUA domain"/>
    <property type="match status" value="1"/>
</dbReference>
<dbReference type="HAMAP" id="MF_00456">
    <property type="entry name" value="ProB"/>
    <property type="match status" value="1"/>
</dbReference>
<dbReference type="InterPro" id="IPR036393">
    <property type="entry name" value="AceGlu_kinase-like_sf"/>
</dbReference>
<dbReference type="InterPro" id="IPR001048">
    <property type="entry name" value="Asp/Glu/Uridylate_kinase"/>
</dbReference>
<dbReference type="InterPro" id="IPR041739">
    <property type="entry name" value="G5K_ProB"/>
</dbReference>
<dbReference type="InterPro" id="IPR001057">
    <property type="entry name" value="Glu/AcGlu_kinase"/>
</dbReference>
<dbReference type="InterPro" id="IPR011529">
    <property type="entry name" value="Glu_5kinase"/>
</dbReference>
<dbReference type="InterPro" id="IPR005715">
    <property type="entry name" value="Glu_5kinase/COase_Synthase"/>
</dbReference>
<dbReference type="InterPro" id="IPR019797">
    <property type="entry name" value="Glutamate_5-kinase_CS"/>
</dbReference>
<dbReference type="InterPro" id="IPR002478">
    <property type="entry name" value="PUA"/>
</dbReference>
<dbReference type="InterPro" id="IPR015947">
    <property type="entry name" value="PUA-like_sf"/>
</dbReference>
<dbReference type="InterPro" id="IPR036974">
    <property type="entry name" value="PUA_sf"/>
</dbReference>
<dbReference type="NCBIfam" id="TIGR01027">
    <property type="entry name" value="proB"/>
    <property type="match status" value="1"/>
</dbReference>
<dbReference type="PANTHER" id="PTHR43654">
    <property type="entry name" value="GLUTAMATE 5-KINASE"/>
    <property type="match status" value="1"/>
</dbReference>
<dbReference type="PANTHER" id="PTHR43654:SF1">
    <property type="entry name" value="ISOPENTENYL PHOSPHATE KINASE"/>
    <property type="match status" value="1"/>
</dbReference>
<dbReference type="Pfam" id="PF00696">
    <property type="entry name" value="AA_kinase"/>
    <property type="match status" value="1"/>
</dbReference>
<dbReference type="Pfam" id="PF01472">
    <property type="entry name" value="PUA"/>
    <property type="match status" value="1"/>
</dbReference>
<dbReference type="PIRSF" id="PIRSF000729">
    <property type="entry name" value="GK"/>
    <property type="match status" value="1"/>
</dbReference>
<dbReference type="PRINTS" id="PR00474">
    <property type="entry name" value="GLU5KINASE"/>
</dbReference>
<dbReference type="SMART" id="SM00359">
    <property type="entry name" value="PUA"/>
    <property type="match status" value="1"/>
</dbReference>
<dbReference type="SUPFAM" id="SSF53633">
    <property type="entry name" value="Carbamate kinase-like"/>
    <property type="match status" value="1"/>
</dbReference>
<dbReference type="SUPFAM" id="SSF88697">
    <property type="entry name" value="PUA domain-like"/>
    <property type="match status" value="1"/>
</dbReference>
<dbReference type="PROSITE" id="PS00902">
    <property type="entry name" value="GLUTAMATE_5_KINASE"/>
    <property type="match status" value="1"/>
</dbReference>
<dbReference type="PROSITE" id="PS50890">
    <property type="entry name" value="PUA"/>
    <property type="match status" value="1"/>
</dbReference>
<feature type="initiator methionine" description="Removed" evidence="2">
    <location>
        <position position="1"/>
    </location>
</feature>
<feature type="chain" id="PRO_1000081076" description="Glutamate 5-kinase">
    <location>
        <begin position="2"/>
        <end position="370"/>
    </location>
</feature>
<feature type="domain" description="PUA" evidence="1">
    <location>
        <begin position="282"/>
        <end position="360"/>
    </location>
</feature>
<feature type="binding site" evidence="1">
    <location>
        <position position="17"/>
    </location>
    <ligand>
        <name>ATP</name>
        <dbReference type="ChEBI" id="CHEBI:30616"/>
    </ligand>
</feature>
<feature type="binding site" evidence="1">
    <location>
        <position position="57"/>
    </location>
    <ligand>
        <name>substrate</name>
    </ligand>
</feature>
<feature type="binding site" evidence="1">
    <location>
        <position position="144"/>
    </location>
    <ligand>
        <name>substrate</name>
    </ligand>
</feature>
<feature type="binding site" evidence="1">
    <location>
        <position position="156"/>
    </location>
    <ligand>
        <name>substrate</name>
    </ligand>
</feature>
<feature type="binding site" evidence="1">
    <location>
        <begin position="176"/>
        <end position="177"/>
    </location>
    <ligand>
        <name>ATP</name>
        <dbReference type="ChEBI" id="CHEBI:30616"/>
    </ligand>
</feature>
<feature type="binding site" evidence="1">
    <location>
        <begin position="220"/>
        <end position="226"/>
    </location>
    <ligand>
        <name>ATP</name>
        <dbReference type="ChEBI" id="CHEBI:30616"/>
    </ligand>
</feature>
<proteinExistence type="evidence at protein level"/>
<reference key="1">
    <citation type="submission" date="2006-10" db="EMBL/GenBank/DDBJ databases">
        <authorList>
            <person name="Fleischmann R.D."/>
            <person name="Dodson R.J."/>
            <person name="Haft D.H."/>
            <person name="Merkel J.S."/>
            <person name="Nelson W.C."/>
            <person name="Fraser C.M."/>
        </authorList>
    </citation>
    <scope>NUCLEOTIDE SEQUENCE [LARGE SCALE GENOMIC DNA]</scope>
    <source>
        <strain>ATCC 700084 / mc(2)155</strain>
    </source>
</reference>
<reference key="2">
    <citation type="journal article" date="2007" name="Genome Biol.">
        <title>Interrupted coding sequences in Mycobacterium smegmatis: authentic mutations or sequencing errors?</title>
        <authorList>
            <person name="Deshayes C."/>
            <person name="Perrodou E."/>
            <person name="Gallien S."/>
            <person name="Euphrasie D."/>
            <person name="Schaeffer C."/>
            <person name="Van-Dorsselaer A."/>
            <person name="Poch O."/>
            <person name="Lecompte O."/>
            <person name="Reyrat J.-M."/>
        </authorList>
    </citation>
    <scope>NUCLEOTIDE SEQUENCE [LARGE SCALE GENOMIC DNA]</scope>
    <source>
        <strain>ATCC 700084 / mc(2)155</strain>
    </source>
</reference>
<reference key="3">
    <citation type="journal article" date="2009" name="Genome Res.">
        <title>Ortho-proteogenomics: multiple proteomes investigation through orthology and a new MS-based protocol.</title>
        <authorList>
            <person name="Gallien S."/>
            <person name="Perrodou E."/>
            <person name="Carapito C."/>
            <person name="Deshayes C."/>
            <person name="Reyrat J.-M."/>
            <person name="Van Dorsselaer A."/>
            <person name="Poch O."/>
            <person name="Schaeffer C."/>
            <person name="Lecompte O."/>
        </authorList>
    </citation>
    <scope>NUCLEOTIDE SEQUENCE [LARGE SCALE GENOMIC DNA]</scope>
    <scope>IDENTIFICATION BY MASS SPECTROMETRY [LARGE SCALE ANALYSIS]</scope>
    <scope>CLEAVAGE OF INITIATOR METHIONINE</scope>
    <source>
        <strain>ATCC 700084 / mc(2)155</strain>
    </source>
</reference>
<keyword id="KW-0028">Amino-acid biosynthesis</keyword>
<keyword id="KW-0067">ATP-binding</keyword>
<keyword id="KW-0963">Cytoplasm</keyword>
<keyword id="KW-0418">Kinase</keyword>
<keyword id="KW-0547">Nucleotide-binding</keyword>
<keyword id="KW-0641">Proline biosynthesis</keyword>
<keyword id="KW-1185">Reference proteome</keyword>
<keyword id="KW-0808">Transferase</keyword>
<organism>
    <name type="scientific">Mycolicibacterium smegmatis (strain ATCC 700084 / mc(2)155)</name>
    <name type="common">Mycobacterium smegmatis</name>
    <dbReference type="NCBI Taxonomy" id="246196"/>
    <lineage>
        <taxon>Bacteria</taxon>
        <taxon>Bacillati</taxon>
        <taxon>Actinomycetota</taxon>
        <taxon>Actinomycetes</taxon>
        <taxon>Mycobacteriales</taxon>
        <taxon>Mycobacteriaceae</taxon>
        <taxon>Mycolicibacterium</taxon>
    </lineage>
</organism>
<evidence type="ECO:0000255" key="1">
    <source>
        <dbReference type="HAMAP-Rule" id="MF_00456"/>
    </source>
</evidence>
<evidence type="ECO:0000269" key="2">
    <source>
    </source>
</evidence>
<comment type="function">
    <text evidence="1">Catalyzes the transfer of a phosphate group to glutamate to form L-glutamate 5-phosphate.</text>
</comment>
<comment type="catalytic activity">
    <reaction evidence="1">
        <text>L-glutamate + ATP = L-glutamyl 5-phosphate + ADP</text>
        <dbReference type="Rhea" id="RHEA:14877"/>
        <dbReference type="ChEBI" id="CHEBI:29985"/>
        <dbReference type="ChEBI" id="CHEBI:30616"/>
        <dbReference type="ChEBI" id="CHEBI:58274"/>
        <dbReference type="ChEBI" id="CHEBI:456216"/>
        <dbReference type="EC" id="2.7.2.11"/>
    </reaction>
</comment>
<comment type="pathway">
    <text evidence="1">Amino-acid biosynthesis; L-proline biosynthesis; L-glutamate 5-semialdehyde from L-glutamate: step 1/2.</text>
</comment>
<comment type="subcellular location">
    <subcellularLocation>
        <location evidence="1">Cytoplasm</location>
    </subcellularLocation>
</comment>
<comment type="similarity">
    <text evidence="1">Belongs to the glutamate 5-kinase family.</text>
</comment>
<name>PROB_MYCS2</name>